<dbReference type="EC" id="6.3.2.9" evidence="1"/>
<dbReference type="EMBL" id="AM233362">
    <property type="protein sequence ID" value="CAJ80053.1"/>
    <property type="molecule type" value="Genomic_DNA"/>
</dbReference>
<dbReference type="RefSeq" id="WP_003017010.1">
    <property type="nucleotide sequence ID" value="NZ_CP009694.1"/>
</dbReference>
<dbReference type="SMR" id="Q2A1Z9"/>
<dbReference type="KEGG" id="ftl:FTL_1614"/>
<dbReference type="UniPathway" id="UPA00219"/>
<dbReference type="Proteomes" id="UP000001944">
    <property type="component" value="Chromosome"/>
</dbReference>
<dbReference type="GO" id="GO:0005737">
    <property type="term" value="C:cytoplasm"/>
    <property type="evidence" value="ECO:0007669"/>
    <property type="project" value="UniProtKB-SubCell"/>
</dbReference>
<dbReference type="GO" id="GO:0005524">
    <property type="term" value="F:ATP binding"/>
    <property type="evidence" value="ECO:0007669"/>
    <property type="project" value="UniProtKB-UniRule"/>
</dbReference>
<dbReference type="GO" id="GO:0008764">
    <property type="term" value="F:UDP-N-acetylmuramoylalanine-D-glutamate ligase activity"/>
    <property type="evidence" value="ECO:0007669"/>
    <property type="project" value="UniProtKB-UniRule"/>
</dbReference>
<dbReference type="GO" id="GO:0051301">
    <property type="term" value="P:cell division"/>
    <property type="evidence" value="ECO:0007669"/>
    <property type="project" value="UniProtKB-KW"/>
</dbReference>
<dbReference type="GO" id="GO:0071555">
    <property type="term" value="P:cell wall organization"/>
    <property type="evidence" value="ECO:0007669"/>
    <property type="project" value="UniProtKB-KW"/>
</dbReference>
<dbReference type="GO" id="GO:0009252">
    <property type="term" value="P:peptidoglycan biosynthetic process"/>
    <property type="evidence" value="ECO:0007669"/>
    <property type="project" value="UniProtKB-UniRule"/>
</dbReference>
<dbReference type="GO" id="GO:0008360">
    <property type="term" value="P:regulation of cell shape"/>
    <property type="evidence" value="ECO:0007669"/>
    <property type="project" value="UniProtKB-KW"/>
</dbReference>
<dbReference type="Gene3D" id="3.90.190.20">
    <property type="entry name" value="Mur ligase, C-terminal domain"/>
    <property type="match status" value="1"/>
</dbReference>
<dbReference type="Gene3D" id="3.40.1190.10">
    <property type="entry name" value="Mur-like, catalytic domain"/>
    <property type="match status" value="1"/>
</dbReference>
<dbReference type="HAMAP" id="MF_00639">
    <property type="entry name" value="MurD"/>
    <property type="match status" value="1"/>
</dbReference>
<dbReference type="InterPro" id="IPR036565">
    <property type="entry name" value="Mur-like_cat_sf"/>
</dbReference>
<dbReference type="InterPro" id="IPR004101">
    <property type="entry name" value="Mur_ligase_C"/>
</dbReference>
<dbReference type="InterPro" id="IPR036615">
    <property type="entry name" value="Mur_ligase_C_dom_sf"/>
</dbReference>
<dbReference type="InterPro" id="IPR013221">
    <property type="entry name" value="Mur_ligase_cen"/>
</dbReference>
<dbReference type="InterPro" id="IPR005762">
    <property type="entry name" value="MurD"/>
</dbReference>
<dbReference type="NCBIfam" id="TIGR01087">
    <property type="entry name" value="murD"/>
    <property type="match status" value="1"/>
</dbReference>
<dbReference type="PANTHER" id="PTHR43692">
    <property type="entry name" value="UDP-N-ACETYLMURAMOYLALANINE--D-GLUTAMATE LIGASE"/>
    <property type="match status" value="1"/>
</dbReference>
<dbReference type="PANTHER" id="PTHR43692:SF1">
    <property type="entry name" value="UDP-N-ACETYLMURAMOYLALANINE--D-GLUTAMATE LIGASE"/>
    <property type="match status" value="1"/>
</dbReference>
<dbReference type="Pfam" id="PF02875">
    <property type="entry name" value="Mur_ligase_C"/>
    <property type="match status" value="1"/>
</dbReference>
<dbReference type="Pfam" id="PF08245">
    <property type="entry name" value="Mur_ligase_M"/>
    <property type="match status" value="1"/>
</dbReference>
<dbReference type="SUPFAM" id="SSF53623">
    <property type="entry name" value="MurD-like peptide ligases, catalytic domain"/>
    <property type="match status" value="1"/>
</dbReference>
<dbReference type="SUPFAM" id="SSF53244">
    <property type="entry name" value="MurD-like peptide ligases, peptide-binding domain"/>
    <property type="match status" value="1"/>
</dbReference>
<protein>
    <recommendedName>
        <fullName evidence="1">UDP-N-acetylmuramoylalanine--D-glutamate ligase</fullName>
        <ecNumber evidence="1">6.3.2.9</ecNumber>
    </recommendedName>
    <alternativeName>
        <fullName evidence="1">D-glutamic acid-adding enzyme</fullName>
    </alternativeName>
    <alternativeName>
        <fullName evidence="1">UDP-N-acetylmuramoyl-L-alanyl-D-glutamate synthetase</fullName>
    </alternativeName>
</protein>
<gene>
    <name evidence="1" type="primary">murD</name>
    <name type="ordered locus">FTL_1614</name>
</gene>
<keyword id="KW-0067">ATP-binding</keyword>
<keyword id="KW-0131">Cell cycle</keyword>
<keyword id="KW-0132">Cell division</keyword>
<keyword id="KW-0133">Cell shape</keyword>
<keyword id="KW-0961">Cell wall biogenesis/degradation</keyword>
<keyword id="KW-0963">Cytoplasm</keyword>
<keyword id="KW-0436">Ligase</keyword>
<keyword id="KW-0547">Nucleotide-binding</keyword>
<keyword id="KW-0573">Peptidoglycan synthesis</keyword>
<keyword id="KW-1185">Reference proteome</keyword>
<accession>Q2A1Z9</accession>
<sequence length="416" mass="46779">MFSFYFNDNKITKLLMVGYGSTGKSVCDFLANFIDITVDISQNDDEFVNYDLNSYDLITVSPGIPLNKSPYRALTKFKDKIVSDIDIFYQYIKDTKAKTIAVTGSNGKSTVVTMTDFVLKDLGYKSILVGNIGTPALNKIGEKFDYCVVEVSSFQINLFNCVRFDLGCIINVSPDHLDRYQNFEQYKQSKLNLAKFSNDFFVYDVHNGIKYAGEYQIIRGAIYRNSTKLLDIVETKLFGEHNLENIIVVLNILDRLGLDINQAIDSIKKFKGLEHRCKIVKKVNGTTYINDSKGTNVGATIAALNSITNSKNIILLLGGVAKGGDFSLMIKSLDKYVKYVYIYGADKEYIESYIKGYCKYQLCNNMKQAFELASQKANSNEIVLLSPACASFDEFSGYAQRGEVFQNLVAQLEQKS</sequence>
<proteinExistence type="inferred from homology"/>
<comment type="function">
    <text evidence="1">Cell wall formation. Catalyzes the addition of glutamate to the nucleotide precursor UDP-N-acetylmuramoyl-L-alanine (UMA).</text>
</comment>
<comment type="catalytic activity">
    <reaction evidence="1">
        <text>UDP-N-acetyl-alpha-D-muramoyl-L-alanine + D-glutamate + ATP = UDP-N-acetyl-alpha-D-muramoyl-L-alanyl-D-glutamate + ADP + phosphate + H(+)</text>
        <dbReference type="Rhea" id="RHEA:16429"/>
        <dbReference type="ChEBI" id="CHEBI:15378"/>
        <dbReference type="ChEBI" id="CHEBI:29986"/>
        <dbReference type="ChEBI" id="CHEBI:30616"/>
        <dbReference type="ChEBI" id="CHEBI:43474"/>
        <dbReference type="ChEBI" id="CHEBI:83898"/>
        <dbReference type="ChEBI" id="CHEBI:83900"/>
        <dbReference type="ChEBI" id="CHEBI:456216"/>
        <dbReference type="EC" id="6.3.2.9"/>
    </reaction>
</comment>
<comment type="pathway">
    <text evidence="1">Cell wall biogenesis; peptidoglycan biosynthesis.</text>
</comment>
<comment type="subcellular location">
    <subcellularLocation>
        <location evidence="1">Cytoplasm</location>
    </subcellularLocation>
</comment>
<comment type="similarity">
    <text evidence="1">Belongs to the MurCDEF family.</text>
</comment>
<organism>
    <name type="scientific">Francisella tularensis subsp. holarctica (strain LVS)</name>
    <dbReference type="NCBI Taxonomy" id="376619"/>
    <lineage>
        <taxon>Bacteria</taxon>
        <taxon>Pseudomonadati</taxon>
        <taxon>Pseudomonadota</taxon>
        <taxon>Gammaproteobacteria</taxon>
        <taxon>Thiotrichales</taxon>
        <taxon>Francisellaceae</taxon>
        <taxon>Francisella</taxon>
    </lineage>
</organism>
<feature type="chain" id="PRO_0000257190" description="UDP-N-acetylmuramoylalanine--D-glutamate ligase">
    <location>
        <begin position="1"/>
        <end position="416"/>
    </location>
</feature>
<feature type="binding site" evidence="1">
    <location>
        <begin position="104"/>
        <end position="110"/>
    </location>
    <ligand>
        <name>ATP</name>
        <dbReference type="ChEBI" id="CHEBI:30616"/>
    </ligand>
</feature>
<reference key="1">
    <citation type="submission" date="2006-03" db="EMBL/GenBank/DDBJ databases">
        <title>Complete genome sequence of Francisella tularensis LVS (Live Vaccine Strain).</title>
        <authorList>
            <person name="Chain P."/>
            <person name="Larimer F."/>
            <person name="Land M."/>
            <person name="Stilwagen S."/>
            <person name="Larsson P."/>
            <person name="Bearden S."/>
            <person name="Chu M."/>
            <person name="Oyston P."/>
            <person name="Forsman M."/>
            <person name="Andersson S."/>
            <person name="Lindler L."/>
            <person name="Titball R."/>
            <person name="Garcia E."/>
        </authorList>
    </citation>
    <scope>NUCLEOTIDE SEQUENCE [LARGE SCALE GENOMIC DNA]</scope>
    <source>
        <strain>LVS</strain>
    </source>
</reference>
<evidence type="ECO:0000255" key="1">
    <source>
        <dbReference type="HAMAP-Rule" id="MF_00639"/>
    </source>
</evidence>
<name>MURD_FRATH</name>